<name>PSBT_LOTJA</name>
<proteinExistence type="inferred from homology"/>
<geneLocation type="chloroplast"/>
<keyword id="KW-0150">Chloroplast</keyword>
<keyword id="KW-0472">Membrane</keyword>
<keyword id="KW-0602">Photosynthesis</keyword>
<keyword id="KW-0604">Photosystem II</keyword>
<keyword id="KW-0934">Plastid</keyword>
<keyword id="KW-0793">Thylakoid</keyword>
<keyword id="KW-0812">Transmembrane</keyword>
<keyword id="KW-1133">Transmembrane helix</keyword>
<organism>
    <name type="scientific">Lotus japonicus</name>
    <name type="common">Lotus corniculatus var. japonicus</name>
    <dbReference type="NCBI Taxonomy" id="34305"/>
    <lineage>
        <taxon>Eukaryota</taxon>
        <taxon>Viridiplantae</taxon>
        <taxon>Streptophyta</taxon>
        <taxon>Embryophyta</taxon>
        <taxon>Tracheophyta</taxon>
        <taxon>Spermatophyta</taxon>
        <taxon>Magnoliopsida</taxon>
        <taxon>eudicotyledons</taxon>
        <taxon>Gunneridae</taxon>
        <taxon>Pentapetalae</taxon>
        <taxon>rosids</taxon>
        <taxon>fabids</taxon>
        <taxon>Fabales</taxon>
        <taxon>Fabaceae</taxon>
        <taxon>Papilionoideae</taxon>
        <taxon>50 kb inversion clade</taxon>
        <taxon>NPAAA clade</taxon>
        <taxon>Hologalegina</taxon>
        <taxon>robinioid clade</taxon>
        <taxon>Loteae</taxon>
        <taxon>Lotus</taxon>
    </lineage>
</organism>
<feature type="chain" id="PRO_0000217945" description="Photosystem II reaction center protein T">
    <location>
        <begin position="1"/>
        <end position="33"/>
    </location>
</feature>
<feature type="transmembrane region" description="Helical" evidence="1">
    <location>
        <begin position="3"/>
        <end position="23"/>
    </location>
</feature>
<sequence>MEALVYTFLLVSTLGIIFFAIFFREPPKVPTKK</sequence>
<gene>
    <name evidence="1" type="primary">psbT</name>
    <name type="synonym">ycf8</name>
</gene>
<accession>P69670</accession>
<accession>P37257</accession>
<reference key="1">
    <citation type="journal article" date="2000" name="DNA Res.">
        <title>Complete structure of the chloroplast genome of a legume, Lotus japonicus.</title>
        <authorList>
            <person name="Kato T."/>
            <person name="Kaneko T."/>
            <person name="Sato S."/>
            <person name="Nakamura Y."/>
            <person name="Tabata S."/>
        </authorList>
    </citation>
    <scope>NUCLEOTIDE SEQUENCE [LARGE SCALE GENOMIC DNA]</scope>
    <source>
        <strain>cv. Miyakojima MG-20</strain>
    </source>
</reference>
<evidence type="ECO:0000255" key="1">
    <source>
        <dbReference type="HAMAP-Rule" id="MF_00808"/>
    </source>
</evidence>
<evidence type="ECO:0000305" key="2"/>
<dbReference type="EMBL" id="AP002983">
    <property type="protein sequence ID" value="BAB33223.1"/>
    <property type="molecule type" value="Genomic_DNA"/>
</dbReference>
<dbReference type="RefSeq" id="NP_084824.1">
    <property type="nucleotide sequence ID" value="NC_002694.1"/>
</dbReference>
<dbReference type="SMR" id="P69670"/>
<dbReference type="GeneID" id="802912"/>
<dbReference type="GO" id="GO:0009535">
    <property type="term" value="C:chloroplast thylakoid membrane"/>
    <property type="evidence" value="ECO:0007669"/>
    <property type="project" value="UniProtKB-SubCell"/>
</dbReference>
<dbReference type="GO" id="GO:0009539">
    <property type="term" value="C:photosystem II reaction center"/>
    <property type="evidence" value="ECO:0007669"/>
    <property type="project" value="InterPro"/>
</dbReference>
<dbReference type="GO" id="GO:0015979">
    <property type="term" value="P:photosynthesis"/>
    <property type="evidence" value="ECO:0007669"/>
    <property type="project" value="UniProtKB-UniRule"/>
</dbReference>
<dbReference type="HAMAP" id="MF_00808">
    <property type="entry name" value="PSII_PsbT"/>
    <property type="match status" value="1"/>
</dbReference>
<dbReference type="InterPro" id="IPR001743">
    <property type="entry name" value="PSII_PsbT"/>
</dbReference>
<dbReference type="InterPro" id="IPR037268">
    <property type="entry name" value="PSII_PsbT_sf"/>
</dbReference>
<dbReference type="PANTHER" id="PTHR36411">
    <property type="match status" value="1"/>
</dbReference>
<dbReference type="PANTHER" id="PTHR36411:SF2">
    <property type="entry name" value="PHOTOSYSTEM II REACTION CENTER PROTEIN T"/>
    <property type="match status" value="1"/>
</dbReference>
<dbReference type="Pfam" id="PF01405">
    <property type="entry name" value="PsbT"/>
    <property type="match status" value="1"/>
</dbReference>
<dbReference type="SUPFAM" id="SSF161029">
    <property type="entry name" value="Photosystem II reaction center protein T, PsbT"/>
    <property type="match status" value="1"/>
</dbReference>
<protein>
    <recommendedName>
        <fullName evidence="1">Photosystem II reaction center protein T</fullName>
        <shortName evidence="1">PSII-T</shortName>
    </recommendedName>
</protein>
<comment type="function">
    <text evidence="1">Found at the monomer-monomer interface of the photosystem II (PS II) dimer, plays a role in assembly and dimerization of PSII. PSII is a light-driven water plastoquinone oxidoreductase, using light energy to abstract electrons from H(2)O, generating a proton gradient subsequently used for ATP formation.</text>
</comment>
<comment type="subunit">
    <text evidence="1">PSII is composed of 1 copy each of membrane proteins PsbA, PsbB, PsbC, PsbD, PsbE, PsbF, PsbH, PsbI, PsbJ, PsbK, PsbL, PsbM, PsbT, PsbY, PsbZ, Psb30/Ycf12, at least 3 peripheral proteins of the oxygen-evolving complex and a large number of cofactors. It forms dimeric complexes.</text>
</comment>
<comment type="subcellular location">
    <subcellularLocation>
        <location evidence="1">Plastid</location>
        <location evidence="1">Chloroplast thylakoid membrane</location>
        <topology evidence="1">Single-pass membrane protein</topology>
    </subcellularLocation>
</comment>
<comment type="similarity">
    <text evidence="1 2">Belongs to the PsbT family.</text>
</comment>